<sequence>MSEEHVHLDESEVYHIRKQKLAELRTSGFNFPNTFRREHLADALLKQYSETEKQTLEQKHVKVSVAGRIVLRRIMGKASFFHIQDVSGRIQVYLRSNDLPDVYEQFKHWDLGDIVGVQGELFKTNTGELTINAEYVELLTKSLRPLPDKFHGLADQELKYRKRYVDLIANEDSRKTFLIRSHLIKAFREFMDDNHFLEVETPMMHPIPGGALARPFVTHHNTLDMTMYLRIAPELYLKRLVVGGFERVYEINRNFRNEGISTRHNPEFTMLEFYQAYADYNDLMNFTEQLFHYLCDKVLATRQIEYQGQVIDFNKPFERLSVKEAILKYHPDIKAQQLETLEGCRTLLNDLGLPYKETDGLGKLQIILFEETVEHQLFQPTFITEYPTEISPLARRSDTNPEVTDRFEFFIAGREIANGFSELNDAEDQAERFRKQVEEKDAGDLEAMHFDSDYIEALEYGLPPTAGEGIGIDRLVMLFTNSQSIRDVILFPHLRQ</sequence>
<evidence type="ECO:0000255" key="1">
    <source>
        <dbReference type="HAMAP-Rule" id="MF_00252"/>
    </source>
</evidence>
<name>SYK_LEGPA</name>
<reference key="1">
    <citation type="journal article" date="2004" name="Nat. Genet.">
        <title>Evidence in the Legionella pneumophila genome for exploitation of host cell functions and high genome plasticity.</title>
        <authorList>
            <person name="Cazalet C."/>
            <person name="Rusniok C."/>
            <person name="Brueggemann H."/>
            <person name="Zidane N."/>
            <person name="Magnier A."/>
            <person name="Ma L."/>
            <person name="Tichit M."/>
            <person name="Jarraud S."/>
            <person name="Bouchier C."/>
            <person name="Vandenesch F."/>
            <person name="Kunst F."/>
            <person name="Etienne J."/>
            <person name="Glaser P."/>
            <person name="Buchrieser C."/>
        </authorList>
    </citation>
    <scope>NUCLEOTIDE SEQUENCE [LARGE SCALE GENOMIC DNA]</scope>
    <source>
        <strain>Paris</strain>
    </source>
</reference>
<organism>
    <name type="scientific">Legionella pneumophila (strain Paris)</name>
    <dbReference type="NCBI Taxonomy" id="297246"/>
    <lineage>
        <taxon>Bacteria</taxon>
        <taxon>Pseudomonadati</taxon>
        <taxon>Pseudomonadota</taxon>
        <taxon>Gammaproteobacteria</taxon>
        <taxon>Legionellales</taxon>
        <taxon>Legionellaceae</taxon>
        <taxon>Legionella</taxon>
    </lineage>
</organism>
<keyword id="KW-0030">Aminoacyl-tRNA synthetase</keyword>
<keyword id="KW-0067">ATP-binding</keyword>
<keyword id="KW-0963">Cytoplasm</keyword>
<keyword id="KW-0436">Ligase</keyword>
<keyword id="KW-0460">Magnesium</keyword>
<keyword id="KW-0479">Metal-binding</keyword>
<keyword id="KW-0547">Nucleotide-binding</keyword>
<keyword id="KW-0648">Protein biosynthesis</keyword>
<protein>
    <recommendedName>
        <fullName evidence="1">Lysine--tRNA ligase</fullName>
        <ecNumber evidence="1">6.1.1.6</ecNumber>
    </recommendedName>
    <alternativeName>
        <fullName evidence="1">Lysyl-tRNA synthetase</fullName>
        <shortName evidence="1">LysRS</shortName>
    </alternativeName>
</protein>
<feature type="chain" id="PRO_1000012882" description="Lysine--tRNA ligase">
    <location>
        <begin position="1"/>
        <end position="496"/>
    </location>
</feature>
<feature type="binding site" evidence="1">
    <location>
        <position position="408"/>
    </location>
    <ligand>
        <name>Mg(2+)</name>
        <dbReference type="ChEBI" id="CHEBI:18420"/>
        <label>1</label>
    </ligand>
</feature>
<feature type="binding site" evidence="1">
    <location>
        <position position="415"/>
    </location>
    <ligand>
        <name>Mg(2+)</name>
        <dbReference type="ChEBI" id="CHEBI:18420"/>
        <label>1</label>
    </ligand>
</feature>
<feature type="binding site" evidence="1">
    <location>
        <position position="415"/>
    </location>
    <ligand>
        <name>Mg(2+)</name>
        <dbReference type="ChEBI" id="CHEBI:18420"/>
        <label>2</label>
    </ligand>
</feature>
<proteinExistence type="inferred from homology"/>
<dbReference type="EC" id="6.1.1.6" evidence="1"/>
<dbReference type="EMBL" id="CR628336">
    <property type="protein sequence ID" value="CAH12893.1"/>
    <property type="molecule type" value="Genomic_DNA"/>
</dbReference>
<dbReference type="RefSeq" id="WP_011214040.1">
    <property type="nucleotide sequence ID" value="NC_006368.1"/>
</dbReference>
<dbReference type="SMR" id="Q5X4D5"/>
<dbReference type="KEGG" id="lpp:lpp1741"/>
<dbReference type="LegioList" id="lpp1741"/>
<dbReference type="HOGENOM" id="CLU_008255_6_0_6"/>
<dbReference type="GO" id="GO:0005829">
    <property type="term" value="C:cytosol"/>
    <property type="evidence" value="ECO:0007669"/>
    <property type="project" value="TreeGrafter"/>
</dbReference>
<dbReference type="GO" id="GO:0005524">
    <property type="term" value="F:ATP binding"/>
    <property type="evidence" value="ECO:0007669"/>
    <property type="project" value="UniProtKB-UniRule"/>
</dbReference>
<dbReference type="GO" id="GO:0004824">
    <property type="term" value="F:lysine-tRNA ligase activity"/>
    <property type="evidence" value="ECO:0007669"/>
    <property type="project" value="UniProtKB-UniRule"/>
</dbReference>
<dbReference type="GO" id="GO:0000287">
    <property type="term" value="F:magnesium ion binding"/>
    <property type="evidence" value="ECO:0007669"/>
    <property type="project" value="UniProtKB-UniRule"/>
</dbReference>
<dbReference type="GO" id="GO:0000049">
    <property type="term" value="F:tRNA binding"/>
    <property type="evidence" value="ECO:0007669"/>
    <property type="project" value="TreeGrafter"/>
</dbReference>
<dbReference type="GO" id="GO:0006430">
    <property type="term" value="P:lysyl-tRNA aminoacylation"/>
    <property type="evidence" value="ECO:0007669"/>
    <property type="project" value="UniProtKB-UniRule"/>
</dbReference>
<dbReference type="CDD" id="cd00775">
    <property type="entry name" value="LysRS_core"/>
    <property type="match status" value="1"/>
</dbReference>
<dbReference type="CDD" id="cd04322">
    <property type="entry name" value="LysRS_N"/>
    <property type="match status" value="1"/>
</dbReference>
<dbReference type="FunFam" id="2.40.50.140:FF:000024">
    <property type="entry name" value="Lysine--tRNA ligase"/>
    <property type="match status" value="1"/>
</dbReference>
<dbReference type="FunFam" id="3.30.930.10:FF:000001">
    <property type="entry name" value="Lysine--tRNA ligase"/>
    <property type="match status" value="1"/>
</dbReference>
<dbReference type="Gene3D" id="3.30.930.10">
    <property type="entry name" value="Bira Bifunctional Protein, Domain 2"/>
    <property type="match status" value="1"/>
</dbReference>
<dbReference type="Gene3D" id="2.40.50.140">
    <property type="entry name" value="Nucleic acid-binding proteins"/>
    <property type="match status" value="1"/>
</dbReference>
<dbReference type="HAMAP" id="MF_00252">
    <property type="entry name" value="Lys_tRNA_synth_class2"/>
    <property type="match status" value="1"/>
</dbReference>
<dbReference type="InterPro" id="IPR004364">
    <property type="entry name" value="Aa-tRNA-synt_II"/>
</dbReference>
<dbReference type="InterPro" id="IPR006195">
    <property type="entry name" value="aa-tRNA-synth_II"/>
</dbReference>
<dbReference type="InterPro" id="IPR045864">
    <property type="entry name" value="aa-tRNA-synth_II/BPL/LPL"/>
</dbReference>
<dbReference type="InterPro" id="IPR002313">
    <property type="entry name" value="Lys-tRNA-ligase_II"/>
</dbReference>
<dbReference type="InterPro" id="IPR044136">
    <property type="entry name" value="Lys-tRNA-ligase_II_N"/>
</dbReference>
<dbReference type="InterPro" id="IPR018149">
    <property type="entry name" value="Lys-tRNA-synth_II_C"/>
</dbReference>
<dbReference type="InterPro" id="IPR012340">
    <property type="entry name" value="NA-bd_OB-fold"/>
</dbReference>
<dbReference type="InterPro" id="IPR004365">
    <property type="entry name" value="NA-bd_OB_tRNA"/>
</dbReference>
<dbReference type="NCBIfam" id="TIGR00499">
    <property type="entry name" value="lysS_bact"/>
    <property type="match status" value="1"/>
</dbReference>
<dbReference type="NCBIfam" id="NF001756">
    <property type="entry name" value="PRK00484.1"/>
    <property type="match status" value="1"/>
</dbReference>
<dbReference type="PANTHER" id="PTHR42918:SF15">
    <property type="entry name" value="LYSINE--TRNA LIGASE, CHLOROPLASTIC_MITOCHONDRIAL"/>
    <property type="match status" value="1"/>
</dbReference>
<dbReference type="PANTHER" id="PTHR42918">
    <property type="entry name" value="LYSYL-TRNA SYNTHETASE"/>
    <property type="match status" value="1"/>
</dbReference>
<dbReference type="Pfam" id="PF00152">
    <property type="entry name" value="tRNA-synt_2"/>
    <property type="match status" value="1"/>
</dbReference>
<dbReference type="Pfam" id="PF01336">
    <property type="entry name" value="tRNA_anti-codon"/>
    <property type="match status" value="1"/>
</dbReference>
<dbReference type="PRINTS" id="PR00982">
    <property type="entry name" value="TRNASYNTHLYS"/>
</dbReference>
<dbReference type="SUPFAM" id="SSF55681">
    <property type="entry name" value="Class II aaRS and biotin synthetases"/>
    <property type="match status" value="1"/>
</dbReference>
<dbReference type="SUPFAM" id="SSF50249">
    <property type="entry name" value="Nucleic acid-binding proteins"/>
    <property type="match status" value="1"/>
</dbReference>
<dbReference type="PROSITE" id="PS50862">
    <property type="entry name" value="AA_TRNA_LIGASE_II"/>
    <property type="match status" value="1"/>
</dbReference>
<gene>
    <name evidence="1" type="primary">lysS</name>
    <name type="ordered locus">lpp1741</name>
</gene>
<comment type="catalytic activity">
    <reaction evidence="1">
        <text>tRNA(Lys) + L-lysine + ATP = L-lysyl-tRNA(Lys) + AMP + diphosphate</text>
        <dbReference type="Rhea" id="RHEA:20792"/>
        <dbReference type="Rhea" id="RHEA-COMP:9696"/>
        <dbReference type="Rhea" id="RHEA-COMP:9697"/>
        <dbReference type="ChEBI" id="CHEBI:30616"/>
        <dbReference type="ChEBI" id="CHEBI:32551"/>
        <dbReference type="ChEBI" id="CHEBI:33019"/>
        <dbReference type="ChEBI" id="CHEBI:78442"/>
        <dbReference type="ChEBI" id="CHEBI:78529"/>
        <dbReference type="ChEBI" id="CHEBI:456215"/>
        <dbReference type="EC" id="6.1.1.6"/>
    </reaction>
</comment>
<comment type="cofactor">
    <cofactor evidence="1">
        <name>Mg(2+)</name>
        <dbReference type="ChEBI" id="CHEBI:18420"/>
    </cofactor>
    <text evidence="1">Binds 3 Mg(2+) ions per subunit.</text>
</comment>
<comment type="subunit">
    <text evidence="1">Homodimer.</text>
</comment>
<comment type="subcellular location">
    <subcellularLocation>
        <location evidence="1">Cytoplasm</location>
    </subcellularLocation>
</comment>
<comment type="similarity">
    <text evidence="1">Belongs to the class-II aminoacyl-tRNA synthetase family.</text>
</comment>
<accession>Q5X4D5</accession>